<name>LEXA_GLUOX</name>
<keyword id="KW-0068">Autocatalytic cleavage</keyword>
<keyword id="KW-0227">DNA damage</keyword>
<keyword id="KW-0234">DNA repair</keyword>
<keyword id="KW-0235">DNA replication</keyword>
<keyword id="KW-0238">DNA-binding</keyword>
<keyword id="KW-0378">Hydrolase</keyword>
<keyword id="KW-1185">Reference proteome</keyword>
<keyword id="KW-0678">Repressor</keyword>
<keyword id="KW-0742">SOS response</keyword>
<keyword id="KW-0804">Transcription</keyword>
<keyword id="KW-0805">Transcription regulation</keyword>
<feature type="chain" id="PRO_0000170040" description="LexA repressor">
    <location>
        <begin position="1"/>
        <end position="238"/>
    </location>
</feature>
<feature type="DNA-binding region" description="H-T-H motif" evidence="1">
    <location>
        <begin position="26"/>
        <end position="46"/>
    </location>
</feature>
<feature type="active site" description="For autocatalytic cleavage activity" evidence="1">
    <location>
        <position position="159"/>
    </location>
</feature>
<feature type="active site" description="For autocatalytic cleavage activity" evidence="1">
    <location>
        <position position="197"/>
    </location>
</feature>
<feature type="site" description="Cleavage; by autolysis" evidence="1">
    <location>
        <begin position="124"/>
        <end position="125"/>
    </location>
</feature>
<sequence>MLTRKQHQLLLYIDDHLRRTGYSPSFDEMKDALELRSKSGIHRLISALEERGFLRRHHHRARALEVLRLPHMGTEAPAATGTGTAFVPAVLNQGQTGLEGAFSEASVANDRQTVSIPLYGRIAAGLPIEAMQDDSDRIDVPVSLLGTGEHYALTVAGDSMIEAGILDGDIAIIRRRETAENGQIIVALIDEQEVTLKKLRRRGSMIALEAANRDYETRIFPAERVHIQGRLVALFRQY</sequence>
<protein>
    <recommendedName>
        <fullName evidence="1">LexA repressor</fullName>
        <ecNumber evidence="1">3.4.21.88</ecNumber>
    </recommendedName>
</protein>
<comment type="function">
    <text evidence="1">Represses a number of genes involved in the response to DNA damage (SOS response), including recA and lexA. In the presence of single-stranded DNA, RecA interacts with LexA causing an autocatalytic cleavage which disrupts the DNA-binding part of LexA, leading to derepression of the SOS regulon and eventually DNA repair.</text>
</comment>
<comment type="catalytic activity">
    <reaction evidence="1">
        <text>Hydrolysis of Ala-|-Gly bond in repressor LexA.</text>
        <dbReference type="EC" id="3.4.21.88"/>
    </reaction>
</comment>
<comment type="subunit">
    <text evidence="1">Homodimer.</text>
</comment>
<comment type="similarity">
    <text evidence="1">Belongs to the peptidase S24 family.</text>
</comment>
<comment type="sequence caution" evidence="2">
    <conflict type="erroneous initiation">
        <sequence resource="EMBL-CDS" id="AAW62009"/>
    </conflict>
</comment>
<accession>Q5FNN8</accession>
<organism>
    <name type="scientific">Gluconobacter oxydans (strain 621H)</name>
    <name type="common">Gluconobacter suboxydans</name>
    <dbReference type="NCBI Taxonomy" id="290633"/>
    <lineage>
        <taxon>Bacteria</taxon>
        <taxon>Pseudomonadati</taxon>
        <taxon>Pseudomonadota</taxon>
        <taxon>Alphaproteobacteria</taxon>
        <taxon>Acetobacterales</taxon>
        <taxon>Acetobacteraceae</taxon>
        <taxon>Gluconobacter</taxon>
    </lineage>
</organism>
<evidence type="ECO:0000255" key="1">
    <source>
        <dbReference type="HAMAP-Rule" id="MF_00015"/>
    </source>
</evidence>
<evidence type="ECO:0000305" key="2"/>
<proteinExistence type="inferred from homology"/>
<gene>
    <name evidence="1" type="primary">lexA</name>
    <name type="ordered locus">GOX2276</name>
</gene>
<reference key="1">
    <citation type="journal article" date="2005" name="Nat. Biotechnol.">
        <title>Complete genome sequence of the acetic acid bacterium Gluconobacter oxydans.</title>
        <authorList>
            <person name="Prust C."/>
            <person name="Hoffmeister M."/>
            <person name="Liesegang H."/>
            <person name="Wiezer A."/>
            <person name="Fricke W.F."/>
            <person name="Ehrenreich A."/>
            <person name="Gottschalk G."/>
            <person name="Deppenmeier U."/>
        </authorList>
    </citation>
    <scope>NUCLEOTIDE SEQUENCE [LARGE SCALE GENOMIC DNA]</scope>
    <source>
        <strain>621H</strain>
    </source>
</reference>
<dbReference type="EC" id="3.4.21.88" evidence="1"/>
<dbReference type="EMBL" id="CP000009">
    <property type="protein sequence ID" value="AAW62009.1"/>
    <property type="status" value="ALT_INIT"/>
    <property type="molecule type" value="Genomic_DNA"/>
</dbReference>
<dbReference type="RefSeq" id="WP_024716897.1">
    <property type="nucleotide sequence ID" value="NZ_LT900338.1"/>
</dbReference>
<dbReference type="SMR" id="Q5FNN8"/>
<dbReference type="STRING" id="290633.GOX2276"/>
<dbReference type="MEROPS" id="S24.001"/>
<dbReference type="GeneID" id="56906643"/>
<dbReference type="KEGG" id="gox:GOX2276"/>
<dbReference type="eggNOG" id="COG1974">
    <property type="taxonomic scope" value="Bacteria"/>
</dbReference>
<dbReference type="HOGENOM" id="CLU_066192_45_2_5"/>
<dbReference type="Proteomes" id="UP000006375">
    <property type="component" value="Chromosome"/>
</dbReference>
<dbReference type="GO" id="GO:0003677">
    <property type="term" value="F:DNA binding"/>
    <property type="evidence" value="ECO:0007669"/>
    <property type="project" value="UniProtKB-UniRule"/>
</dbReference>
<dbReference type="GO" id="GO:0004252">
    <property type="term" value="F:serine-type endopeptidase activity"/>
    <property type="evidence" value="ECO:0007669"/>
    <property type="project" value="UniProtKB-UniRule"/>
</dbReference>
<dbReference type="GO" id="GO:0006281">
    <property type="term" value="P:DNA repair"/>
    <property type="evidence" value="ECO:0007669"/>
    <property type="project" value="UniProtKB-UniRule"/>
</dbReference>
<dbReference type="GO" id="GO:0006260">
    <property type="term" value="P:DNA replication"/>
    <property type="evidence" value="ECO:0007669"/>
    <property type="project" value="UniProtKB-UniRule"/>
</dbReference>
<dbReference type="GO" id="GO:0045892">
    <property type="term" value="P:negative regulation of DNA-templated transcription"/>
    <property type="evidence" value="ECO:0007669"/>
    <property type="project" value="UniProtKB-UniRule"/>
</dbReference>
<dbReference type="GO" id="GO:0006508">
    <property type="term" value="P:proteolysis"/>
    <property type="evidence" value="ECO:0007669"/>
    <property type="project" value="InterPro"/>
</dbReference>
<dbReference type="GO" id="GO:0009432">
    <property type="term" value="P:SOS response"/>
    <property type="evidence" value="ECO:0007669"/>
    <property type="project" value="UniProtKB-UniRule"/>
</dbReference>
<dbReference type="CDD" id="cd06529">
    <property type="entry name" value="S24_LexA-like"/>
    <property type="match status" value="1"/>
</dbReference>
<dbReference type="FunFam" id="2.10.109.10:FF:000001">
    <property type="entry name" value="LexA repressor"/>
    <property type="match status" value="1"/>
</dbReference>
<dbReference type="Gene3D" id="2.10.109.10">
    <property type="entry name" value="Umud Fragment, subunit A"/>
    <property type="match status" value="1"/>
</dbReference>
<dbReference type="Gene3D" id="1.10.10.10">
    <property type="entry name" value="Winged helix-like DNA-binding domain superfamily/Winged helix DNA-binding domain"/>
    <property type="match status" value="1"/>
</dbReference>
<dbReference type="HAMAP" id="MF_00015">
    <property type="entry name" value="LexA"/>
    <property type="match status" value="1"/>
</dbReference>
<dbReference type="InterPro" id="IPR006200">
    <property type="entry name" value="LexA"/>
</dbReference>
<dbReference type="InterPro" id="IPR039418">
    <property type="entry name" value="LexA-like"/>
</dbReference>
<dbReference type="InterPro" id="IPR036286">
    <property type="entry name" value="LexA/Signal_pep-like_sf"/>
</dbReference>
<dbReference type="InterPro" id="IPR006199">
    <property type="entry name" value="LexA_DNA-bd_dom"/>
</dbReference>
<dbReference type="InterPro" id="IPR050077">
    <property type="entry name" value="LexA_repressor"/>
</dbReference>
<dbReference type="InterPro" id="IPR006197">
    <property type="entry name" value="Peptidase_S24_LexA"/>
</dbReference>
<dbReference type="InterPro" id="IPR015927">
    <property type="entry name" value="Peptidase_S24_S26A/B/C"/>
</dbReference>
<dbReference type="InterPro" id="IPR036388">
    <property type="entry name" value="WH-like_DNA-bd_sf"/>
</dbReference>
<dbReference type="InterPro" id="IPR036390">
    <property type="entry name" value="WH_DNA-bd_sf"/>
</dbReference>
<dbReference type="NCBIfam" id="TIGR00498">
    <property type="entry name" value="lexA"/>
    <property type="match status" value="1"/>
</dbReference>
<dbReference type="PANTHER" id="PTHR33516">
    <property type="entry name" value="LEXA REPRESSOR"/>
    <property type="match status" value="1"/>
</dbReference>
<dbReference type="PANTHER" id="PTHR33516:SF2">
    <property type="entry name" value="LEXA REPRESSOR-RELATED"/>
    <property type="match status" value="1"/>
</dbReference>
<dbReference type="Pfam" id="PF01726">
    <property type="entry name" value="LexA_DNA_bind"/>
    <property type="match status" value="1"/>
</dbReference>
<dbReference type="Pfam" id="PF00717">
    <property type="entry name" value="Peptidase_S24"/>
    <property type="match status" value="1"/>
</dbReference>
<dbReference type="PRINTS" id="PR00726">
    <property type="entry name" value="LEXASERPTASE"/>
</dbReference>
<dbReference type="SUPFAM" id="SSF51306">
    <property type="entry name" value="LexA/Signal peptidase"/>
    <property type="match status" value="1"/>
</dbReference>
<dbReference type="SUPFAM" id="SSF46785">
    <property type="entry name" value="Winged helix' DNA-binding domain"/>
    <property type="match status" value="1"/>
</dbReference>